<accession>B1AJD7</accession>
<gene>
    <name evidence="1" type="primary">rpsD</name>
    <name type="ordered locus">UPA3_0515</name>
</gene>
<sequence length="202" mass="23124">MSRYTGSIYKKSRRLGFSLLENNKEFNSGKKRTYGPGQHGNKKVKLSNYGQQLVEKQKLMFLYGLNDRQFRRLYRVALGRPGVLTLNLLQVLESRLDSLVYRAGFAPTRRAARQLVNHSHVLVNNKKVNIPSALVEVGSTIALKAKSLEIPLIKNTLNKPADFIELIDKEKKVAKLARLPERNELPADVNEAYVVEWYNRLM</sequence>
<dbReference type="EMBL" id="CP000942">
    <property type="protein sequence ID" value="ACA33064.1"/>
    <property type="molecule type" value="Genomic_DNA"/>
</dbReference>
<dbReference type="RefSeq" id="WP_006688490.1">
    <property type="nucleotide sequence ID" value="NC_010503.1"/>
</dbReference>
<dbReference type="SMR" id="B1AJD7"/>
<dbReference type="GeneID" id="29672308"/>
<dbReference type="KEGG" id="upa:UPA3_0515"/>
<dbReference type="HOGENOM" id="CLU_092403_0_1_14"/>
<dbReference type="Proteomes" id="UP000002162">
    <property type="component" value="Chromosome"/>
</dbReference>
<dbReference type="GO" id="GO:0015935">
    <property type="term" value="C:small ribosomal subunit"/>
    <property type="evidence" value="ECO:0007669"/>
    <property type="project" value="InterPro"/>
</dbReference>
<dbReference type="GO" id="GO:0019843">
    <property type="term" value="F:rRNA binding"/>
    <property type="evidence" value="ECO:0007669"/>
    <property type="project" value="UniProtKB-UniRule"/>
</dbReference>
<dbReference type="GO" id="GO:0003735">
    <property type="term" value="F:structural constituent of ribosome"/>
    <property type="evidence" value="ECO:0007669"/>
    <property type="project" value="InterPro"/>
</dbReference>
<dbReference type="GO" id="GO:0042274">
    <property type="term" value="P:ribosomal small subunit biogenesis"/>
    <property type="evidence" value="ECO:0007669"/>
    <property type="project" value="TreeGrafter"/>
</dbReference>
<dbReference type="GO" id="GO:0006412">
    <property type="term" value="P:translation"/>
    <property type="evidence" value="ECO:0007669"/>
    <property type="project" value="UniProtKB-UniRule"/>
</dbReference>
<dbReference type="CDD" id="cd00165">
    <property type="entry name" value="S4"/>
    <property type="match status" value="1"/>
</dbReference>
<dbReference type="FunFam" id="3.10.290.10:FF:000001">
    <property type="entry name" value="30S ribosomal protein S4"/>
    <property type="match status" value="1"/>
</dbReference>
<dbReference type="Gene3D" id="1.10.1050.10">
    <property type="entry name" value="Ribosomal Protein S4 Delta 41, Chain A, domain 1"/>
    <property type="match status" value="1"/>
</dbReference>
<dbReference type="Gene3D" id="3.10.290.10">
    <property type="entry name" value="RNA-binding S4 domain"/>
    <property type="match status" value="1"/>
</dbReference>
<dbReference type="HAMAP" id="MF_01306_B">
    <property type="entry name" value="Ribosomal_uS4_B"/>
    <property type="match status" value="1"/>
</dbReference>
<dbReference type="InterPro" id="IPR022801">
    <property type="entry name" value="Ribosomal_uS4"/>
</dbReference>
<dbReference type="InterPro" id="IPR005709">
    <property type="entry name" value="Ribosomal_uS4_bac-type"/>
</dbReference>
<dbReference type="InterPro" id="IPR018079">
    <property type="entry name" value="Ribosomal_uS4_CS"/>
</dbReference>
<dbReference type="InterPro" id="IPR001912">
    <property type="entry name" value="Ribosomal_uS4_N"/>
</dbReference>
<dbReference type="InterPro" id="IPR002942">
    <property type="entry name" value="S4_RNA-bd"/>
</dbReference>
<dbReference type="InterPro" id="IPR036986">
    <property type="entry name" value="S4_RNA-bd_sf"/>
</dbReference>
<dbReference type="NCBIfam" id="NF003717">
    <property type="entry name" value="PRK05327.1"/>
    <property type="match status" value="1"/>
</dbReference>
<dbReference type="NCBIfam" id="TIGR01017">
    <property type="entry name" value="rpsD_bact"/>
    <property type="match status" value="1"/>
</dbReference>
<dbReference type="PANTHER" id="PTHR11831">
    <property type="entry name" value="30S 40S RIBOSOMAL PROTEIN"/>
    <property type="match status" value="1"/>
</dbReference>
<dbReference type="PANTHER" id="PTHR11831:SF4">
    <property type="entry name" value="SMALL RIBOSOMAL SUBUNIT PROTEIN US4M"/>
    <property type="match status" value="1"/>
</dbReference>
<dbReference type="Pfam" id="PF00163">
    <property type="entry name" value="Ribosomal_S4"/>
    <property type="match status" value="1"/>
</dbReference>
<dbReference type="Pfam" id="PF01479">
    <property type="entry name" value="S4"/>
    <property type="match status" value="1"/>
</dbReference>
<dbReference type="SMART" id="SM01390">
    <property type="entry name" value="Ribosomal_S4"/>
    <property type="match status" value="1"/>
</dbReference>
<dbReference type="SMART" id="SM00363">
    <property type="entry name" value="S4"/>
    <property type="match status" value="1"/>
</dbReference>
<dbReference type="SUPFAM" id="SSF55174">
    <property type="entry name" value="Alpha-L RNA-binding motif"/>
    <property type="match status" value="1"/>
</dbReference>
<dbReference type="PROSITE" id="PS00632">
    <property type="entry name" value="RIBOSOMAL_S4"/>
    <property type="match status" value="1"/>
</dbReference>
<dbReference type="PROSITE" id="PS50889">
    <property type="entry name" value="S4"/>
    <property type="match status" value="1"/>
</dbReference>
<comment type="function">
    <text evidence="1">One of the primary rRNA binding proteins, it binds directly to 16S rRNA where it nucleates assembly of the body of the 30S subunit.</text>
</comment>
<comment type="function">
    <text evidence="1">With S5 and S12 plays an important role in translational accuracy.</text>
</comment>
<comment type="subunit">
    <text evidence="1">Part of the 30S ribosomal subunit. Contacts protein S5. The interaction surface between S4 and S5 is involved in control of translational fidelity.</text>
</comment>
<comment type="similarity">
    <text evidence="1">Belongs to the universal ribosomal protein uS4 family.</text>
</comment>
<evidence type="ECO:0000255" key="1">
    <source>
        <dbReference type="HAMAP-Rule" id="MF_01306"/>
    </source>
</evidence>
<evidence type="ECO:0000305" key="2"/>
<proteinExistence type="inferred from homology"/>
<protein>
    <recommendedName>
        <fullName evidence="1">Small ribosomal subunit protein uS4</fullName>
    </recommendedName>
    <alternativeName>
        <fullName evidence="2">30S ribosomal protein S4</fullName>
    </alternativeName>
</protein>
<reference key="1">
    <citation type="submission" date="2008-02" db="EMBL/GenBank/DDBJ databases">
        <title>Genome sequence of Ureaplasma parvum serovar 3.</title>
        <authorList>
            <person name="Methe B.A."/>
            <person name="Glass J."/>
            <person name="Waites K."/>
            <person name="Shrivastava S."/>
        </authorList>
    </citation>
    <scope>NUCLEOTIDE SEQUENCE [LARGE SCALE GENOMIC DNA]</scope>
    <source>
        <strain>ATCC 27815 / 27 / NCTC 11736</strain>
    </source>
</reference>
<keyword id="KW-0687">Ribonucleoprotein</keyword>
<keyword id="KW-0689">Ribosomal protein</keyword>
<keyword id="KW-0694">RNA-binding</keyword>
<keyword id="KW-0699">rRNA-binding</keyword>
<organism>
    <name type="scientific">Ureaplasma parvum serovar 3 (strain ATCC 27815 / 27 / NCTC 11736)</name>
    <dbReference type="NCBI Taxonomy" id="505682"/>
    <lineage>
        <taxon>Bacteria</taxon>
        <taxon>Bacillati</taxon>
        <taxon>Mycoplasmatota</taxon>
        <taxon>Mycoplasmoidales</taxon>
        <taxon>Mycoplasmoidaceae</taxon>
        <taxon>Ureaplasma</taxon>
    </lineage>
</organism>
<name>RS4_UREP2</name>
<feature type="chain" id="PRO_1000085997" description="Small ribosomal subunit protein uS4">
    <location>
        <begin position="1"/>
        <end position="202"/>
    </location>
</feature>
<feature type="domain" description="S4 RNA-binding" evidence="1">
    <location>
        <begin position="94"/>
        <end position="157"/>
    </location>
</feature>